<comment type="function">
    <text evidence="1 4">May play a role in translational regulation of stored mRNAs in transcriptionally inactive haploid spermatids. Binds to poly(U) RNA oligomers (PubMed:12672660). Required for cell cycle progression, specifically for the transition from metaphase to anaphase (By similarity).</text>
</comment>
<comment type="subunit">
    <text evidence="6">Interacts with TENT2/GLD2.</text>
</comment>
<comment type="subcellular location">
    <subcellularLocation>
        <location evidence="4">Cytoplasm</location>
    </subcellularLocation>
</comment>
<comment type="tissue specificity">
    <text evidence="4 5">Expressed in embryo, cerebellum, salivary gland, thymus, heart, liver, lung, spleen, kidney, intestine, ovary and round spermatids. Weakly expressed in granular cells of dentate gyrus and the pyramidal cells of CA3 and CA1 of the hippocampus.</text>
</comment>
<comment type="induction">
    <text evidence="5">Not induced by kainate.</text>
</comment>
<comment type="similarity">
    <text evidence="7">Belongs to the RRM CPEB family.</text>
</comment>
<feature type="chain" id="PRO_0000269260" description="Cytoplasmic polyadenylation element-binding protein 2">
    <location>
        <begin position="1"/>
        <end position="521"/>
    </location>
</feature>
<feature type="domain" description="RRM 1" evidence="2">
    <location>
        <begin position="264"/>
        <end position="355"/>
    </location>
</feature>
<feature type="domain" description="RRM 2" evidence="2">
    <location>
        <begin position="372"/>
        <end position="454"/>
    </location>
</feature>
<feature type="region of interest" description="Disordered" evidence="3">
    <location>
        <begin position="1"/>
        <end position="35"/>
    </location>
</feature>
<feature type="region of interest" description="Disordered" evidence="3">
    <location>
        <begin position="50"/>
        <end position="88"/>
    </location>
</feature>
<feature type="compositionally biased region" description="Pro residues" evidence="3">
    <location>
        <begin position="1"/>
        <end position="11"/>
    </location>
</feature>
<feature type="compositionally biased region" description="Low complexity" evidence="3">
    <location>
        <begin position="12"/>
        <end position="35"/>
    </location>
</feature>
<feature type="compositionally biased region" description="Polar residues" evidence="3">
    <location>
        <begin position="55"/>
        <end position="70"/>
    </location>
</feature>
<feature type="modified residue" description="Phosphoserine" evidence="8">
    <location>
        <position position="21"/>
    </location>
</feature>
<proteinExistence type="evidence at protein level"/>
<accession>Q812E0</accession>
<keyword id="KW-0963">Cytoplasm</keyword>
<keyword id="KW-0597">Phosphoprotein</keyword>
<keyword id="KW-1185">Reference proteome</keyword>
<keyword id="KW-0677">Repeat</keyword>
<keyword id="KW-0694">RNA-binding</keyword>
<keyword id="KW-0810">Translation regulation</keyword>
<protein>
    <recommendedName>
        <fullName>Cytoplasmic polyadenylation element-binding protein 2</fullName>
        <shortName>CPE-BP2</shortName>
        <shortName>CPE-binding protein 2</shortName>
        <shortName>mCPEB-2</shortName>
    </recommendedName>
</protein>
<name>CPEB2_MOUSE</name>
<dbReference type="EMBL" id="AB100307">
    <property type="protein sequence ID" value="BAC57076.1"/>
    <property type="molecule type" value="mRNA"/>
</dbReference>
<dbReference type="EMBL" id="BC107349">
    <property type="protein sequence ID" value="AAI07350.1"/>
    <property type="molecule type" value="mRNA"/>
</dbReference>
<dbReference type="EMBL" id="BC107350">
    <property type="protein sequence ID" value="AAI07351.1"/>
    <property type="molecule type" value="mRNA"/>
</dbReference>
<dbReference type="SMR" id="Q812E0"/>
<dbReference type="FunCoup" id="Q812E0">
    <property type="interactions" value="159"/>
</dbReference>
<dbReference type="STRING" id="10090.ENSMUSP00000125857"/>
<dbReference type="GlyGen" id="Q812E0">
    <property type="glycosylation" value="1 site, 1 N-linked glycan (1 site)"/>
</dbReference>
<dbReference type="iPTMnet" id="Q812E0"/>
<dbReference type="PhosphoSitePlus" id="Q812E0"/>
<dbReference type="PaxDb" id="10090-ENSMUSP00000130921"/>
<dbReference type="ProteomicsDB" id="284156"/>
<dbReference type="AGR" id="MGI:2442640"/>
<dbReference type="MGI" id="MGI:2442640">
    <property type="gene designation" value="Cpeb2"/>
</dbReference>
<dbReference type="eggNOG" id="KOG0129">
    <property type="taxonomic scope" value="Eukaryota"/>
</dbReference>
<dbReference type="HOGENOM" id="CLU_014948_2_0_1"/>
<dbReference type="InParanoid" id="Q812E0"/>
<dbReference type="PhylomeDB" id="Q812E0"/>
<dbReference type="ChiTaRS" id="Cpeb2">
    <property type="organism name" value="mouse"/>
</dbReference>
<dbReference type="PRO" id="PR:Q812E0"/>
<dbReference type="Proteomes" id="UP000000589">
    <property type="component" value="Unplaced"/>
</dbReference>
<dbReference type="RNAct" id="Q812E0">
    <property type="molecule type" value="protein"/>
</dbReference>
<dbReference type="GO" id="GO:0005737">
    <property type="term" value="C:cytoplasm"/>
    <property type="evidence" value="ECO:0000314"/>
    <property type="project" value="MGI"/>
</dbReference>
<dbReference type="GO" id="GO:0098978">
    <property type="term" value="C:glutamatergic synapse"/>
    <property type="evidence" value="ECO:0000314"/>
    <property type="project" value="SynGO"/>
</dbReference>
<dbReference type="GO" id="GO:0005634">
    <property type="term" value="C:nucleus"/>
    <property type="evidence" value="ECO:0000250"/>
    <property type="project" value="UniProtKB"/>
</dbReference>
<dbReference type="GO" id="GO:0005840">
    <property type="term" value="C:ribosome"/>
    <property type="evidence" value="ECO:0000314"/>
    <property type="project" value="MGI"/>
</dbReference>
<dbReference type="GO" id="GO:0005095">
    <property type="term" value="F:GTPase inhibitor activity"/>
    <property type="evidence" value="ECO:0000250"/>
    <property type="project" value="UniProtKB"/>
</dbReference>
<dbReference type="GO" id="GO:0035925">
    <property type="term" value="F:mRNA 3'-UTR AU-rich region binding"/>
    <property type="evidence" value="ECO:0000314"/>
    <property type="project" value="UniProtKB"/>
</dbReference>
<dbReference type="GO" id="GO:0000900">
    <property type="term" value="F:mRNA regulatory element binding translation repressor activity"/>
    <property type="evidence" value="ECO:0000314"/>
    <property type="project" value="UniProtKB"/>
</dbReference>
<dbReference type="GO" id="GO:0008187">
    <property type="term" value="F:poly-pyrimidine tract binding"/>
    <property type="evidence" value="ECO:0000314"/>
    <property type="project" value="MGI"/>
</dbReference>
<dbReference type="GO" id="GO:0043023">
    <property type="term" value="F:ribosomal large subunit binding"/>
    <property type="evidence" value="ECO:0000250"/>
    <property type="project" value="UniProtKB"/>
</dbReference>
<dbReference type="GO" id="GO:0043024">
    <property type="term" value="F:ribosomal small subunit binding"/>
    <property type="evidence" value="ECO:0000250"/>
    <property type="project" value="UniProtKB"/>
</dbReference>
<dbReference type="GO" id="GO:0043022">
    <property type="term" value="F:ribosome binding"/>
    <property type="evidence" value="ECO:0000314"/>
    <property type="project" value="UniProtKB"/>
</dbReference>
<dbReference type="GO" id="GO:0071456">
    <property type="term" value="P:cellular response to hypoxia"/>
    <property type="evidence" value="ECO:0000314"/>
    <property type="project" value="UniProtKB"/>
</dbReference>
<dbReference type="GO" id="GO:0032869">
    <property type="term" value="P:cellular response to insulin stimulus"/>
    <property type="evidence" value="ECO:0000250"/>
    <property type="project" value="UniProtKB"/>
</dbReference>
<dbReference type="GO" id="GO:2000766">
    <property type="term" value="P:negative regulation of cytoplasmic translation"/>
    <property type="evidence" value="ECO:0000314"/>
    <property type="project" value="UniProtKB"/>
</dbReference>
<dbReference type="GO" id="GO:1900248">
    <property type="term" value="P:negative regulation of cytoplasmic translational elongation"/>
    <property type="evidence" value="ECO:0000250"/>
    <property type="project" value="UniProtKB"/>
</dbReference>
<dbReference type="GO" id="GO:0045900">
    <property type="term" value="P:negative regulation of translational elongation"/>
    <property type="evidence" value="ECO:0000316"/>
    <property type="project" value="MGI"/>
</dbReference>
<dbReference type="GO" id="GO:0099547">
    <property type="term" value="P:regulation of translation at synapse, modulating synaptic transmission"/>
    <property type="evidence" value="ECO:0000314"/>
    <property type="project" value="SynGO"/>
</dbReference>
<dbReference type="CDD" id="cd19757">
    <property type="entry name" value="Bbox1"/>
    <property type="match status" value="1"/>
</dbReference>
<dbReference type="CDD" id="cd12724">
    <property type="entry name" value="RRM1_CPEB2_like"/>
    <property type="match status" value="1"/>
</dbReference>
<dbReference type="CDD" id="cd12726">
    <property type="entry name" value="RRM2_CPEB2_like"/>
    <property type="match status" value="1"/>
</dbReference>
<dbReference type="FunFam" id="3.30.70.330:FF:000008">
    <property type="entry name" value="Cytoplasmic polyadenylation element-binding 2 isoform X2"/>
    <property type="match status" value="1"/>
</dbReference>
<dbReference type="FunFam" id="4.10.640.40:FF:000001">
    <property type="entry name" value="Cytoplasmic polyadenylation element-binding 2 isoform X2"/>
    <property type="match status" value="1"/>
</dbReference>
<dbReference type="FunFam" id="3.30.70.330:FF:000009">
    <property type="entry name" value="cytoplasmic polyadenylation element-binding protein 2 isoform X1"/>
    <property type="match status" value="1"/>
</dbReference>
<dbReference type="Gene3D" id="3.30.70.330">
    <property type="match status" value="2"/>
</dbReference>
<dbReference type="Gene3D" id="4.10.640.40">
    <property type="entry name" value="Cytoplasmic polyadenylation element-binding protein, ZZ domain"/>
    <property type="match status" value="1"/>
</dbReference>
<dbReference type="InterPro" id="IPR032296">
    <property type="entry name" value="CEBP_ZZ"/>
</dbReference>
<dbReference type="InterPro" id="IPR038446">
    <property type="entry name" value="CEBP_ZZ_sf"/>
</dbReference>
<dbReference type="InterPro" id="IPR034819">
    <property type="entry name" value="CPEB"/>
</dbReference>
<dbReference type="InterPro" id="IPR012677">
    <property type="entry name" value="Nucleotide-bd_a/b_plait_sf"/>
</dbReference>
<dbReference type="InterPro" id="IPR035979">
    <property type="entry name" value="RBD_domain_sf"/>
</dbReference>
<dbReference type="InterPro" id="IPR000504">
    <property type="entry name" value="RRM_dom"/>
</dbReference>
<dbReference type="PANTHER" id="PTHR12566">
    <property type="entry name" value="CYTOPLASMIC POLYADENYLATION ELEMENT BINDING PROTEIN CPEB"/>
    <property type="match status" value="1"/>
</dbReference>
<dbReference type="PANTHER" id="PTHR12566:SF8">
    <property type="entry name" value="CYTOPLASMIC POLYADENYLATION ELEMENT-BINDING PROTEIN 2"/>
    <property type="match status" value="1"/>
</dbReference>
<dbReference type="Pfam" id="PF16366">
    <property type="entry name" value="CEBP_ZZ"/>
    <property type="match status" value="1"/>
</dbReference>
<dbReference type="Pfam" id="PF16367">
    <property type="entry name" value="RRM_7"/>
    <property type="match status" value="1"/>
</dbReference>
<dbReference type="SMART" id="SM00360">
    <property type="entry name" value="RRM"/>
    <property type="match status" value="2"/>
</dbReference>
<dbReference type="SUPFAM" id="SSF54928">
    <property type="entry name" value="RNA-binding domain, RBD"/>
    <property type="match status" value="1"/>
</dbReference>
<dbReference type="PROSITE" id="PS50102">
    <property type="entry name" value="RRM"/>
    <property type="match status" value="2"/>
</dbReference>
<evidence type="ECO:0000250" key="1">
    <source>
        <dbReference type="UniProtKB" id="Q7Z5Q1"/>
    </source>
</evidence>
<evidence type="ECO:0000255" key="2">
    <source>
        <dbReference type="PROSITE-ProRule" id="PRU00176"/>
    </source>
</evidence>
<evidence type="ECO:0000256" key="3">
    <source>
        <dbReference type="SAM" id="MobiDB-lite"/>
    </source>
</evidence>
<evidence type="ECO:0000269" key="4">
    <source>
    </source>
</evidence>
<evidence type="ECO:0000269" key="5">
    <source>
    </source>
</evidence>
<evidence type="ECO:0000269" key="6">
    <source>
    </source>
</evidence>
<evidence type="ECO:0000305" key="7"/>
<evidence type="ECO:0007744" key="8">
    <source>
    </source>
</evidence>
<reference key="1">
    <citation type="journal article" date="2003" name="Biol. Reprod.">
        <title>CPEB2, a novel putative translational regulator in mouse haploid germ cells.</title>
        <authorList>
            <person name="Kurihara Y."/>
            <person name="Tokuriki M."/>
            <person name="Myojin R."/>
            <person name="Hori T."/>
            <person name="Kuroiwa A."/>
            <person name="Matsuda Y."/>
            <person name="Sakurai T."/>
            <person name="Kimura M."/>
            <person name="Hecht N.B."/>
            <person name="Uesugi S."/>
        </authorList>
    </citation>
    <scope>NUCLEOTIDE SEQUENCE [MRNA]</scope>
    <scope>RNA-BINDING</scope>
    <scope>SUBCELLULAR LOCATION</scope>
    <scope>TISSUE SPECIFICITY</scope>
    <source>
        <tissue>Testis</tissue>
    </source>
</reference>
<reference key="2">
    <citation type="journal article" date="2004" name="Genome Res.">
        <title>The status, quality, and expansion of the NIH full-length cDNA project: the Mammalian Gene Collection (MGC).</title>
        <authorList>
            <consortium name="The MGC Project Team"/>
        </authorList>
    </citation>
    <scope>NUCLEOTIDE SEQUENCE [LARGE SCALE MRNA]</scope>
</reference>
<reference key="3">
    <citation type="journal article" date="2003" name="Proc. Natl. Acad. Sci. U.S.A.">
        <title>Two previously undescribed members of the mouse CPEB family of genes and their inducible expression in the principal cell layers of the hippocampus.</title>
        <authorList>
            <person name="Theis M."/>
            <person name="Si K."/>
            <person name="Kandel E.R."/>
        </authorList>
    </citation>
    <scope>TISSUE SPECIFICITY</scope>
    <scope>ABSENCE OF INDUCTION</scope>
    <source>
        <strain>BALB/cJ</strain>
        <tissue>Brain</tissue>
    </source>
</reference>
<reference key="4">
    <citation type="journal article" date="2007" name="Biochem. Biophys. Res. Commun.">
        <title>Disruption of mouse poly(A) polymerase mGLD-2 does not alter polyadenylation status in oocytes and somatic cells.</title>
        <authorList>
            <person name="Nakanishi T."/>
            <person name="Kumagai S."/>
            <person name="Kimura M."/>
            <person name="Watanabe H."/>
            <person name="Sakurai T."/>
            <person name="Kimura M."/>
            <person name="Kashiwabara S."/>
            <person name="Baba T."/>
        </authorList>
    </citation>
    <scope>INTERACTION WITH TENT2</scope>
</reference>
<reference key="5">
    <citation type="journal article" date="2010" name="Cell">
        <title>A tissue-specific atlas of mouse protein phosphorylation and expression.</title>
        <authorList>
            <person name="Huttlin E.L."/>
            <person name="Jedrychowski M.P."/>
            <person name="Elias J.E."/>
            <person name="Goswami T."/>
            <person name="Rad R."/>
            <person name="Beausoleil S.A."/>
            <person name="Villen J."/>
            <person name="Haas W."/>
            <person name="Sowa M.E."/>
            <person name="Gygi S.P."/>
        </authorList>
    </citation>
    <scope>PHOSPHORYLATION [LARGE SCALE ANALYSIS] AT SER-21</scope>
    <scope>IDENTIFICATION BY MASS SPECTROMETRY [LARGE SCALE ANALYSIS]</scope>
    <source>
        <tissue>Brain</tissue>
        <tissue>Kidney</tissue>
        <tissue>Liver</tissue>
        <tissue>Testis</tissue>
    </source>
</reference>
<organism>
    <name type="scientific">Mus musculus</name>
    <name type="common">Mouse</name>
    <dbReference type="NCBI Taxonomy" id="10090"/>
    <lineage>
        <taxon>Eukaryota</taxon>
        <taxon>Metazoa</taxon>
        <taxon>Chordata</taxon>
        <taxon>Craniata</taxon>
        <taxon>Vertebrata</taxon>
        <taxon>Euteleostomi</taxon>
        <taxon>Mammalia</taxon>
        <taxon>Eutheria</taxon>
        <taxon>Euarchontoglires</taxon>
        <taxon>Glires</taxon>
        <taxon>Rodentia</taxon>
        <taxon>Myomorpha</taxon>
        <taxon>Muroidea</taxon>
        <taxon>Muridae</taxon>
        <taxon>Murinae</taxon>
        <taxon>Mus</taxon>
        <taxon>Mus</taxon>
    </lineage>
</organism>
<gene>
    <name type="primary">Cpeb2</name>
</gene>
<sequence>MNLPQQQPPAAAPQQPQSRRSPVSPQLQQQHQAAAAAFLQQRNSYNHHQPLLKQSPWSNHQNSGWGTASMSWGAMHGRDHRRSGNMGIPGTMNQISPLKKPFSGNVIAPPKFTRSTPSLTPKSWIEDNVFRTDNNSNTLLPLQVRSSLQLPAWGSDSLQDSWCTAAGTSRIDQDRSRMYDSLNMHSLENSLIDIMRAEHDPLKGRLSYPHPGTDNLLMLNGRSSLFPIDDSLLDDGHSDQVGVLNSPTCYSAHQNGERIERFSRKVFVGGLPPDIDEDEITASFRRFGPLVVDWPHKAESKSYFPPKGYAFLLFQEESSVQALIDACIEEDGKLYLCVSSPTIKDKPVQIRPWNLSDSDFVMDGSQPLDPRKTIFVGGVPRPLRAVELAMIMDRLYGGVCYAGIDTDPELKYPKGAGRVAFSNQQSYIAAISARFVQLQHGDIDKRVEVKPYVLDDQMCDECQGARCGGKFAPFFCANVTCLQYYCEFCWANIHSRAGREFHKPLVKEGADRPRQIHFRWN</sequence>